<feature type="chain" id="PRO_0000299064" description="Nuclear protein MDM1">
    <location>
        <begin position="1"/>
        <end position="656"/>
    </location>
</feature>
<feature type="region of interest" description="Disordered" evidence="3">
    <location>
        <begin position="1"/>
        <end position="126"/>
    </location>
</feature>
<feature type="region of interest" description="Disordered" evidence="3">
    <location>
        <begin position="208"/>
        <end position="264"/>
    </location>
</feature>
<feature type="region of interest" description="Disordered" evidence="3">
    <location>
        <begin position="386"/>
        <end position="504"/>
    </location>
</feature>
<feature type="region of interest" description="Disordered" evidence="3">
    <location>
        <begin position="550"/>
        <end position="589"/>
    </location>
</feature>
<feature type="region of interest" description="Disordered" evidence="3">
    <location>
        <begin position="614"/>
        <end position="638"/>
    </location>
</feature>
<feature type="coiled-coil region" evidence="2">
    <location>
        <begin position="309"/>
        <end position="337"/>
    </location>
</feature>
<feature type="short sequence motif" description="ST]-E-Y-X(3)-F motif 1; required for efficient microtubule binding and stabilization" evidence="1">
    <location>
        <begin position="161"/>
        <end position="167"/>
    </location>
</feature>
<feature type="short sequence motif" description="ST]-E-Y-X(3)-F motif 2; required for efficient microtubule binding and stabilization" evidence="1">
    <location>
        <begin position="204"/>
        <end position="210"/>
    </location>
</feature>
<feature type="short sequence motif" description="ST]-E-Y-X(3)-F motif 3; required for efficient microtubule binding and stabilization" evidence="1">
    <location>
        <begin position="291"/>
        <end position="297"/>
    </location>
</feature>
<feature type="compositionally biased region" description="Polar residues" evidence="3">
    <location>
        <begin position="38"/>
        <end position="48"/>
    </location>
</feature>
<feature type="compositionally biased region" description="Basic and acidic residues" evidence="3">
    <location>
        <begin position="68"/>
        <end position="82"/>
    </location>
</feature>
<feature type="compositionally biased region" description="Low complexity" evidence="3">
    <location>
        <begin position="111"/>
        <end position="126"/>
    </location>
</feature>
<feature type="compositionally biased region" description="Basic residues" evidence="3">
    <location>
        <begin position="243"/>
        <end position="257"/>
    </location>
</feature>
<feature type="compositionally biased region" description="Low complexity" evidence="3">
    <location>
        <begin position="398"/>
        <end position="409"/>
    </location>
</feature>
<feature type="compositionally biased region" description="Basic and acidic residues" evidence="3">
    <location>
        <begin position="434"/>
        <end position="465"/>
    </location>
</feature>
<feature type="compositionally biased region" description="Low complexity" evidence="3">
    <location>
        <begin position="466"/>
        <end position="482"/>
    </location>
</feature>
<feature type="compositionally biased region" description="Low complexity" evidence="3">
    <location>
        <begin position="625"/>
        <end position="638"/>
    </location>
</feature>
<feature type="splice variant" id="VSP_027553" description="In isoform 2." evidence="4">
    <location>
        <begin position="289"/>
        <end position="449"/>
    </location>
</feature>
<feature type="sequence conflict" description="In Ref. 2; AAI34091." evidence="5" ref="2">
    <original>G</original>
    <variation>R</variation>
    <location>
        <position position="42"/>
    </location>
</feature>
<feature type="sequence conflict" description="In Ref. 2; AAI34091." evidence="5" ref="2">
    <original>S</original>
    <variation>T</variation>
    <location>
        <position position="237"/>
    </location>
</feature>
<feature type="sequence conflict" description="In Ref. 2; AAI34091." evidence="5" ref="2">
    <original>Q</original>
    <variation>K</variation>
    <location>
        <position position="268"/>
    </location>
</feature>
<feature type="sequence conflict" description="In Ref. 2; AAI34091." evidence="5" ref="2">
    <original>V</original>
    <variation>L</variation>
    <location>
        <position position="540"/>
    </location>
</feature>
<evidence type="ECO:0000250" key="1">
    <source>
        <dbReference type="UniProtKB" id="Q8TC05"/>
    </source>
</evidence>
<evidence type="ECO:0000255" key="2"/>
<evidence type="ECO:0000256" key="3">
    <source>
        <dbReference type="SAM" id="MobiDB-lite"/>
    </source>
</evidence>
<evidence type="ECO:0000303" key="4">
    <source ref="2"/>
</evidence>
<evidence type="ECO:0000305" key="5"/>
<proteinExistence type="evidence at transcript level"/>
<protein>
    <recommendedName>
        <fullName>Nuclear protein MDM1</fullName>
    </recommendedName>
</protein>
<name>MDM1_DANRE</name>
<reference key="1">
    <citation type="journal article" date="2013" name="Nature">
        <title>The zebrafish reference genome sequence and its relationship to the human genome.</title>
        <authorList>
            <person name="Howe K."/>
            <person name="Clark M.D."/>
            <person name="Torroja C.F."/>
            <person name="Torrance J."/>
            <person name="Berthelot C."/>
            <person name="Muffato M."/>
            <person name="Collins J.E."/>
            <person name="Humphray S."/>
            <person name="McLaren K."/>
            <person name="Matthews L."/>
            <person name="McLaren S."/>
            <person name="Sealy I."/>
            <person name="Caccamo M."/>
            <person name="Churcher C."/>
            <person name="Scott C."/>
            <person name="Barrett J.C."/>
            <person name="Koch R."/>
            <person name="Rauch G.J."/>
            <person name="White S."/>
            <person name="Chow W."/>
            <person name="Kilian B."/>
            <person name="Quintais L.T."/>
            <person name="Guerra-Assuncao J.A."/>
            <person name="Zhou Y."/>
            <person name="Gu Y."/>
            <person name="Yen J."/>
            <person name="Vogel J.H."/>
            <person name="Eyre T."/>
            <person name="Redmond S."/>
            <person name="Banerjee R."/>
            <person name="Chi J."/>
            <person name="Fu B."/>
            <person name="Langley E."/>
            <person name="Maguire S.F."/>
            <person name="Laird G.K."/>
            <person name="Lloyd D."/>
            <person name="Kenyon E."/>
            <person name="Donaldson S."/>
            <person name="Sehra H."/>
            <person name="Almeida-King J."/>
            <person name="Loveland J."/>
            <person name="Trevanion S."/>
            <person name="Jones M."/>
            <person name="Quail M."/>
            <person name="Willey D."/>
            <person name="Hunt A."/>
            <person name="Burton J."/>
            <person name="Sims S."/>
            <person name="McLay K."/>
            <person name="Plumb B."/>
            <person name="Davis J."/>
            <person name="Clee C."/>
            <person name="Oliver K."/>
            <person name="Clark R."/>
            <person name="Riddle C."/>
            <person name="Elliot D."/>
            <person name="Threadgold G."/>
            <person name="Harden G."/>
            <person name="Ware D."/>
            <person name="Begum S."/>
            <person name="Mortimore B."/>
            <person name="Kerry G."/>
            <person name="Heath P."/>
            <person name="Phillimore B."/>
            <person name="Tracey A."/>
            <person name="Corby N."/>
            <person name="Dunn M."/>
            <person name="Johnson C."/>
            <person name="Wood J."/>
            <person name="Clark S."/>
            <person name="Pelan S."/>
            <person name="Griffiths G."/>
            <person name="Smith M."/>
            <person name="Glithero R."/>
            <person name="Howden P."/>
            <person name="Barker N."/>
            <person name="Lloyd C."/>
            <person name="Stevens C."/>
            <person name="Harley J."/>
            <person name="Holt K."/>
            <person name="Panagiotidis G."/>
            <person name="Lovell J."/>
            <person name="Beasley H."/>
            <person name="Henderson C."/>
            <person name="Gordon D."/>
            <person name="Auger K."/>
            <person name="Wright D."/>
            <person name="Collins J."/>
            <person name="Raisen C."/>
            <person name="Dyer L."/>
            <person name="Leung K."/>
            <person name="Robertson L."/>
            <person name="Ambridge K."/>
            <person name="Leongamornlert D."/>
            <person name="McGuire S."/>
            <person name="Gilderthorp R."/>
            <person name="Griffiths C."/>
            <person name="Manthravadi D."/>
            <person name="Nichol S."/>
            <person name="Barker G."/>
            <person name="Whitehead S."/>
            <person name="Kay M."/>
            <person name="Brown J."/>
            <person name="Murnane C."/>
            <person name="Gray E."/>
            <person name="Humphries M."/>
            <person name="Sycamore N."/>
            <person name="Barker D."/>
            <person name="Saunders D."/>
            <person name="Wallis J."/>
            <person name="Babbage A."/>
            <person name="Hammond S."/>
            <person name="Mashreghi-Mohammadi M."/>
            <person name="Barr L."/>
            <person name="Martin S."/>
            <person name="Wray P."/>
            <person name="Ellington A."/>
            <person name="Matthews N."/>
            <person name="Ellwood M."/>
            <person name="Woodmansey R."/>
            <person name="Clark G."/>
            <person name="Cooper J."/>
            <person name="Tromans A."/>
            <person name="Grafham D."/>
            <person name="Skuce C."/>
            <person name="Pandian R."/>
            <person name="Andrews R."/>
            <person name="Harrison E."/>
            <person name="Kimberley A."/>
            <person name="Garnett J."/>
            <person name="Fosker N."/>
            <person name="Hall R."/>
            <person name="Garner P."/>
            <person name="Kelly D."/>
            <person name="Bird C."/>
            <person name="Palmer S."/>
            <person name="Gehring I."/>
            <person name="Berger A."/>
            <person name="Dooley C.M."/>
            <person name="Ersan-Urun Z."/>
            <person name="Eser C."/>
            <person name="Geiger H."/>
            <person name="Geisler M."/>
            <person name="Karotki L."/>
            <person name="Kirn A."/>
            <person name="Konantz J."/>
            <person name="Konantz M."/>
            <person name="Oberlander M."/>
            <person name="Rudolph-Geiger S."/>
            <person name="Teucke M."/>
            <person name="Lanz C."/>
            <person name="Raddatz G."/>
            <person name="Osoegawa K."/>
            <person name="Zhu B."/>
            <person name="Rapp A."/>
            <person name="Widaa S."/>
            <person name="Langford C."/>
            <person name="Yang F."/>
            <person name="Schuster S.C."/>
            <person name="Carter N.P."/>
            <person name="Harrow J."/>
            <person name="Ning Z."/>
            <person name="Herrero J."/>
            <person name="Searle S.M."/>
            <person name="Enright A."/>
            <person name="Geisler R."/>
            <person name="Plasterk R.H."/>
            <person name="Lee C."/>
            <person name="Westerfield M."/>
            <person name="de Jong P.J."/>
            <person name="Zon L.I."/>
            <person name="Postlethwait J.H."/>
            <person name="Nusslein-Volhard C."/>
            <person name="Hubbard T.J."/>
            <person name="Roest Crollius H."/>
            <person name="Rogers J."/>
            <person name="Stemple D.L."/>
        </authorList>
    </citation>
    <scope>NUCLEOTIDE SEQUENCE [LARGE SCALE GENOMIC DNA]</scope>
    <source>
        <strain>Tuebingen</strain>
    </source>
</reference>
<reference key="2">
    <citation type="submission" date="2007-03" db="EMBL/GenBank/DDBJ databases">
        <authorList>
            <consortium name="NIH - Zebrafish Gene Collection (ZGC) project"/>
        </authorList>
    </citation>
    <scope>NUCLEOTIDE SEQUENCE [LARGE SCALE MRNA] (ISOFORM 2)</scope>
</reference>
<comment type="function">
    <text evidence="1">Microtubule-binding protein that negatively regulates centriole duplication. Binds to and stabilizes microtubules.</text>
</comment>
<comment type="subcellular location">
    <subcellularLocation>
        <location evidence="1">Nucleus</location>
    </subcellularLocation>
    <subcellularLocation>
        <location evidence="1">Cytoplasm</location>
        <location evidence="1">Cytoskeleton</location>
        <location evidence="1">Microtubule organizing center</location>
        <location evidence="1">Centrosome</location>
    </subcellularLocation>
    <subcellularLocation>
        <location evidence="1">Cytoplasm</location>
        <location evidence="1">Cytoskeleton</location>
        <location evidence="1">Microtubule organizing center</location>
        <location evidence="1">Centrosome</location>
        <location evidence="1">Centriole</location>
    </subcellularLocation>
    <text evidence="1">Localizes to the centriole lumen.</text>
</comment>
<comment type="alternative products">
    <event type="alternative splicing"/>
    <isoform>
        <id>Q5RHU7-1</id>
        <name>1</name>
        <sequence type="displayed"/>
    </isoform>
    <isoform>
        <id>Q5RHU7-2</id>
        <name>2</name>
        <sequence type="described" ref="VSP_027553"/>
    </isoform>
</comment>
<comment type="similarity">
    <text evidence="5">Belongs to the MDM1 family.</text>
</comment>
<comment type="sequence caution" evidence="5">
    <conflict type="erroneous gene model prediction">
        <sequence resource="EMBL-CDS" id="CAI11945"/>
    </conflict>
</comment>
<accession>Q5RHU7</accession>
<accession>A3KNZ6</accession>
<accession>Q5RHU8</accession>
<sequence length="656" mass="74293">MPVRFKGISEYRSKYKGRTSRSRSDSPHRRMRLAGLRSDQSGITQEPQFISKRRVPFYPSQVSSSFRWEGRDHSQQQLEKSRSPAVSPVLRATSAERQVTPLAPRDPPEGTTAPSQPPQAEAAQTSTFAVQKQKQALNGINHALRMKAGLRSEHQRNGLNSEYQRQFMWKTPVAESPLLAAHQMLYSNNRAIPPFKTNPVIMESEYKRSFKGSPLPRPPRLRRDVEQYEVPEFLTESKTPEKSKRKKKKKERPHSRKSSPEQEVAYLQQQEVKSPHNLKDPSPKVMRKGKTEYRSNFHSPLQYSYKDGAWLKIKSAKEEVKELRERAEAYKKRAWGTHFSRQHLNQILSDQNWMWEPSSGTSSSSIESEACRSTSHIIEALDLARAGSVRESSSPGHSASVVVSRRSSSGEVGLPEEPTLPVQRKLAWDEEEQLGEREEIVQDRLTDKEGKTRNENGMERNERLNSLESESLSSAEEGSEASVNGGRLPTPKLKTMQTVQRTHHDRTTPSIDFNLHYIAKAANGSLPRSSPVAGLTTVDVLPMREDVWSDEEVTDYRSLKPPKPSRKQQSSQRHKANAAPPANRIQGTMRNAEFQHNGNLGIFRPELFVLPQSDSALSDNDDKMSQISSRSAASCSMASEVLGRAQRRKQEFWGKS</sequence>
<keyword id="KW-0025">Alternative splicing</keyword>
<keyword id="KW-0175">Coiled coil</keyword>
<keyword id="KW-0963">Cytoplasm</keyword>
<keyword id="KW-0206">Cytoskeleton</keyword>
<keyword id="KW-0493">Microtubule</keyword>
<keyword id="KW-0539">Nucleus</keyword>
<keyword id="KW-1185">Reference proteome</keyword>
<keyword id="KW-0677">Repeat</keyword>
<dbReference type="EMBL" id="BX465210">
    <property type="protein sequence ID" value="CAI11945.1"/>
    <property type="status" value="ALT_SEQ"/>
    <property type="molecule type" value="Genomic_DNA"/>
</dbReference>
<dbReference type="EMBL" id="BX465210">
    <property type="protein sequence ID" value="CAI11946.1"/>
    <property type="molecule type" value="Genomic_DNA"/>
</dbReference>
<dbReference type="EMBL" id="BC134090">
    <property type="protein sequence ID" value="AAI34091.1"/>
    <property type="molecule type" value="mRNA"/>
</dbReference>
<dbReference type="RefSeq" id="NP_001038285.1">
    <molecule id="Q5RHU7-1"/>
    <property type="nucleotide sequence ID" value="NM_001044820.1"/>
</dbReference>
<dbReference type="FunCoup" id="Q5RHU7">
    <property type="interactions" value="1185"/>
</dbReference>
<dbReference type="STRING" id="7955.ENSDARP00000092786"/>
<dbReference type="PaxDb" id="7955-ENSDARP00000116078"/>
<dbReference type="Ensembl" id="ENSDART00000102010">
    <molecule id="Q5RHU7-1"/>
    <property type="protein sequence ID" value="ENSDARP00000092786"/>
    <property type="gene ID" value="ENSDARG00000045675"/>
</dbReference>
<dbReference type="GeneID" id="557148"/>
<dbReference type="KEGG" id="dre:557148"/>
<dbReference type="AGR" id="ZFIN:ZDB-GENE-041210-117"/>
<dbReference type="CTD" id="56890"/>
<dbReference type="ZFIN" id="ZDB-GENE-041210-117">
    <property type="gene designation" value="mdm1"/>
</dbReference>
<dbReference type="eggNOG" id="ENOG502QVRV">
    <property type="taxonomic scope" value="Eukaryota"/>
</dbReference>
<dbReference type="HOGENOM" id="CLU_023835_0_0_1"/>
<dbReference type="InParanoid" id="Q5RHU7"/>
<dbReference type="OrthoDB" id="9999940at2759"/>
<dbReference type="PhylomeDB" id="Q5RHU7"/>
<dbReference type="TreeFam" id="TF331015"/>
<dbReference type="PRO" id="PR:Q5RHU7"/>
<dbReference type="Proteomes" id="UP000000437">
    <property type="component" value="Chromosome 4"/>
</dbReference>
<dbReference type="Bgee" id="ENSDARG00000045675">
    <property type="expression patterns" value="Expressed in testis and 29 other cell types or tissues"/>
</dbReference>
<dbReference type="ExpressionAtlas" id="Q5RHU7">
    <property type="expression patterns" value="baseline"/>
</dbReference>
<dbReference type="GO" id="GO:0005814">
    <property type="term" value="C:centriole"/>
    <property type="evidence" value="ECO:0000250"/>
    <property type="project" value="UniProtKB"/>
</dbReference>
<dbReference type="GO" id="GO:0005813">
    <property type="term" value="C:centrosome"/>
    <property type="evidence" value="ECO:0000250"/>
    <property type="project" value="UniProtKB"/>
</dbReference>
<dbReference type="GO" id="GO:0005737">
    <property type="term" value="C:cytoplasm"/>
    <property type="evidence" value="ECO:0007669"/>
    <property type="project" value="UniProtKB-KW"/>
</dbReference>
<dbReference type="GO" id="GO:0005874">
    <property type="term" value="C:microtubule"/>
    <property type="evidence" value="ECO:0007669"/>
    <property type="project" value="UniProtKB-KW"/>
</dbReference>
<dbReference type="GO" id="GO:0005634">
    <property type="term" value="C:nucleus"/>
    <property type="evidence" value="ECO:0000250"/>
    <property type="project" value="UniProtKB"/>
</dbReference>
<dbReference type="GO" id="GO:0008017">
    <property type="term" value="F:microtubule binding"/>
    <property type="evidence" value="ECO:0000250"/>
    <property type="project" value="UniProtKB"/>
</dbReference>
<dbReference type="GO" id="GO:0046600">
    <property type="term" value="P:negative regulation of centriole replication"/>
    <property type="evidence" value="ECO:0000250"/>
    <property type="project" value="UniProtKB"/>
</dbReference>
<dbReference type="InterPro" id="IPR029136">
    <property type="entry name" value="MDM1"/>
</dbReference>
<dbReference type="PANTHER" id="PTHR32078">
    <property type="entry name" value="NUCLEAR PROTEIN MDM1"/>
    <property type="match status" value="1"/>
</dbReference>
<dbReference type="PANTHER" id="PTHR32078:SF1">
    <property type="entry name" value="NUCLEAR PROTEIN MDM1"/>
    <property type="match status" value="1"/>
</dbReference>
<dbReference type="Pfam" id="PF15501">
    <property type="entry name" value="MDM1"/>
    <property type="match status" value="1"/>
</dbReference>
<gene>
    <name type="primary">mdm1</name>
    <name type="ORF">si:ch211-266a5.6</name>
</gene>
<organism>
    <name type="scientific">Danio rerio</name>
    <name type="common">Zebrafish</name>
    <name type="synonym">Brachydanio rerio</name>
    <dbReference type="NCBI Taxonomy" id="7955"/>
    <lineage>
        <taxon>Eukaryota</taxon>
        <taxon>Metazoa</taxon>
        <taxon>Chordata</taxon>
        <taxon>Craniata</taxon>
        <taxon>Vertebrata</taxon>
        <taxon>Euteleostomi</taxon>
        <taxon>Actinopterygii</taxon>
        <taxon>Neopterygii</taxon>
        <taxon>Teleostei</taxon>
        <taxon>Ostariophysi</taxon>
        <taxon>Cypriniformes</taxon>
        <taxon>Danionidae</taxon>
        <taxon>Danioninae</taxon>
        <taxon>Danio</taxon>
    </lineage>
</organism>